<reference key="1">
    <citation type="journal article" date="2007" name="PLoS ONE">
        <title>Analysis of the neurotoxin complex genes in Clostridium botulinum A1-A4 and B1 strains: BoNT/A3, /Ba4 and /B1 clusters are located within plasmids.</title>
        <authorList>
            <person name="Smith T.J."/>
            <person name="Hill K.K."/>
            <person name="Foley B.T."/>
            <person name="Detter J.C."/>
            <person name="Munk A.C."/>
            <person name="Bruce D.C."/>
            <person name="Doggett N.A."/>
            <person name="Smith L.A."/>
            <person name="Marks J.D."/>
            <person name="Xie G."/>
            <person name="Brettin T.S."/>
        </authorList>
    </citation>
    <scope>NUCLEOTIDE SEQUENCE [LARGE SCALE GENOMIC DNA]</scope>
    <source>
        <strain>ATCC 19397 / Type A</strain>
    </source>
</reference>
<evidence type="ECO:0000255" key="1">
    <source>
        <dbReference type="HAMAP-Rule" id="MF_00208"/>
    </source>
</evidence>
<organism>
    <name type="scientific">Clostridium botulinum (strain ATCC 19397 / Type A)</name>
    <dbReference type="NCBI Taxonomy" id="441770"/>
    <lineage>
        <taxon>Bacteria</taxon>
        <taxon>Bacillati</taxon>
        <taxon>Bacillota</taxon>
        <taxon>Clostridia</taxon>
        <taxon>Eubacteriales</taxon>
        <taxon>Clostridiaceae</taxon>
        <taxon>Clostridium</taxon>
    </lineage>
</organism>
<gene>
    <name evidence="1" type="primary">murE</name>
    <name type="ordered locus">CLB_1482</name>
</gene>
<feature type="chain" id="PRO_1000012347" description="UDP-N-acetylmuramoyl-L-alanyl-D-glutamate--2,6-diaminopimelate ligase">
    <location>
        <begin position="1"/>
        <end position="483"/>
    </location>
</feature>
<feature type="short sequence motif" description="Meso-diaminopimelate recognition motif">
    <location>
        <begin position="404"/>
        <end position="407"/>
    </location>
</feature>
<feature type="binding site" evidence="1">
    <location>
        <position position="29"/>
    </location>
    <ligand>
        <name>UDP-N-acetyl-alpha-D-muramoyl-L-alanyl-D-glutamate</name>
        <dbReference type="ChEBI" id="CHEBI:83900"/>
    </ligand>
</feature>
<feature type="binding site" evidence="1">
    <location>
        <begin position="112"/>
        <end position="118"/>
    </location>
    <ligand>
        <name>ATP</name>
        <dbReference type="ChEBI" id="CHEBI:30616"/>
    </ligand>
</feature>
<feature type="binding site" evidence="1">
    <location>
        <begin position="154"/>
        <end position="155"/>
    </location>
    <ligand>
        <name>UDP-N-acetyl-alpha-D-muramoyl-L-alanyl-D-glutamate</name>
        <dbReference type="ChEBI" id="CHEBI:83900"/>
    </ligand>
</feature>
<feature type="binding site" evidence="1">
    <location>
        <position position="181"/>
    </location>
    <ligand>
        <name>UDP-N-acetyl-alpha-D-muramoyl-L-alanyl-D-glutamate</name>
        <dbReference type="ChEBI" id="CHEBI:83900"/>
    </ligand>
</feature>
<feature type="binding site" evidence="1">
    <location>
        <position position="189"/>
    </location>
    <ligand>
        <name>UDP-N-acetyl-alpha-D-muramoyl-L-alanyl-D-glutamate</name>
        <dbReference type="ChEBI" id="CHEBI:83900"/>
    </ligand>
</feature>
<feature type="binding site" evidence="1">
    <location>
        <position position="380"/>
    </location>
    <ligand>
        <name>meso-2,6-diaminopimelate</name>
        <dbReference type="ChEBI" id="CHEBI:57791"/>
    </ligand>
</feature>
<feature type="binding site" evidence="1">
    <location>
        <begin position="404"/>
        <end position="407"/>
    </location>
    <ligand>
        <name>meso-2,6-diaminopimelate</name>
        <dbReference type="ChEBI" id="CHEBI:57791"/>
    </ligand>
</feature>
<feature type="binding site" evidence="1">
    <location>
        <position position="454"/>
    </location>
    <ligand>
        <name>meso-2,6-diaminopimelate</name>
        <dbReference type="ChEBI" id="CHEBI:57791"/>
    </ligand>
</feature>
<feature type="binding site" evidence="1">
    <location>
        <position position="458"/>
    </location>
    <ligand>
        <name>meso-2,6-diaminopimelate</name>
        <dbReference type="ChEBI" id="CHEBI:57791"/>
    </ligand>
</feature>
<feature type="modified residue" description="N6-carboxylysine" evidence="1">
    <location>
        <position position="221"/>
    </location>
</feature>
<keyword id="KW-0067">ATP-binding</keyword>
<keyword id="KW-0131">Cell cycle</keyword>
<keyword id="KW-0132">Cell division</keyword>
<keyword id="KW-0133">Cell shape</keyword>
<keyword id="KW-0961">Cell wall biogenesis/degradation</keyword>
<keyword id="KW-0963">Cytoplasm</keyword>
<keyword id="KW-0436">Ligase</keyword>
<keyword id="KW-0460">Magnesium</keyword>
<keyword id="KW-0547">Nucleotide-binding</keyword>
<keyword id="KW-0573">Peptidoglycan synthesis</keyword>
<comment type="function">
    <text evidence="1">Catalyzes the addition of meso-diaminopimelic acid to the nucleotide precursor UDP-N-acetylmuramoyl-L-alanyl-D-glutamate (UMAG) in the biosynthesis of bacterial cell-wall peptidoglycan.</text>
</comment>
<comment type="catalytic activity">
    <reaction evidence="1">
        <text>UDP-N-acetyl-alpha-D-muramoyl-L-alanyl-D-glutamate + meso-2,6-diaminopimelate + ATP = UDP-N-acetyl-alpha-D-muramoyl-L-alanyl-gamma-D-glutamyl-meso-2,6-diaminopimelate + ADP + phosphate + H(+)</text>
        <dbReference type="Rhea" id="RHEA:23676"/>
        <dbReference type="ChEBI" id="CHEBI:15378"/>
        <dbReference type="ChEBI" id="CHEBI:30616"/>
        <dbReference type="ChEBI" id="CHEBI:43474"/>
        <dbReference type="ChEBI" id="CHEBI:57791"/>
        <dbReference type="ChEBI" id="CHEBI:83900"/>
        <dbReference type="ChEBI" id="CHEBI:83905"/>
        <dbReference type="ChEBI" id="CHEBI:456216"/>
        <dbReference type="EC" id="6.3.2.13"/>
    </reaction>
</comment>
<comment type="cofactor">
    <cofactor evidence="1">
        <name>Mg(2+)</name>
        <dbReference type="ChEBI" id="CHEBI:18420"/>
    </cofactor>
</comment>
<comment type="pathway">
    <text evidence="1">Cell wall biogenesis; peptidoglycan biosynthesis.</text>
</comment>
<comment type="subcellular location">
    <subcellularLocation>
        <location evidence="1">Cytoplasm</location>
    </subcellularLocation>
</comment>
<comment type="PTM">
    <text evidence="1">Carboxylation is probably crucial for Mg(2+) binding and, consequently, for the gamma-phosphate positioning of ATP.</text>
</comment>
<comment type="similarity">
    <text evidence="1">Belongs to the MurCDEF family. MurE subfamily.</text>
</comment>
<sequence length="483" mass="54678">MNLNLILKSLEYSFIKENKKEIEKIEYDSRKVKEGDLFVCIEGYATDGHKYAKKAYDNGAKVIVCEKDLEDLSYYKDCTIIKVSDSRKALAIMSSNYYGNPSKHIKIIGITGTNGKTTSTFMMKAILEKAGYKVGLLGTIANYIGNKKIESHRTTPESLELQKLFKDMVDEKVDYCVMEVSSHSLYLDRVYGVEFKEAIFTNLTQDHLDFHKTFENYFNSKLILFKNAQNSVINIDDSYGEKVLKKALGNKITYGVEKNCDLKAENLHMHSRGVEFDTIFKNEKETIALNIPGKYNIYNALGSIGACLLEGIPLKTIKEALEDMPSVPGRCEIVTKNYNLGYDVIVDYAHTPDGLENILNTAREFTKGRLISVYGCGGDRDRTKRPIMGKVGSNLSDIAIITSDNPRTEDPKLIIKDVLEGIERDNYIVVEGRRDAIRKAMEIAKENDVIVVAGKGHEDYQILKDKTIHFDEREVIEELIKEI</sequence>
<dbReference type="EC" id="6.3.2.13" evidence="1"/>
<dbReference type="EMBL" id="CP000726">
    <property type="protein sequence ID" value="ABS32867.1"/>
    <property type="molecule type" value="Genomic_DNA"/>
</dbReference>
<dbReference type="RefSeq" id="WP_011949035.1">
    <property type="nucleotide sequence ID" value="NC_009697.1"/>
</dbReference>
<dbReference type="SMR" id="A7FTY1"/>
<dbReference type="KEGG" id="cba:CLB_1482"/>
<dbReference type="HOGENOM" id="CLU_022291_4_1_9"/>
<dbReference type="UniPathway" id="UPA00219"/>
<dbReference type="GO" id="GO:0005737">
    <property type="term" value="C:cytoplasm"/>
    <property type="evidence" value="ECO:0007669"/>
    <property type="project" value="UniProtKB-SubCell"/>
</dbReference>
<dbReference type="GO" id="GO:0005524">
    <property type="term" value="F:ATP binding"/>
    <property type="evidence" value="ECO:0007669"/>
    <property type="project" value="UniProtKB-UniRule"/>
</dbReference>
<dbReference type="GO" id="GO:0000287">
    <property type="term" value="F:magnesium ion binding"/>
    <property type="evidence" value="ECO:0007669"/>
    <property type="project" value="UniProtKB-UniRule"/>
</dbReference>
<dbReference type="GO" id="GO:0008765">
    <property type="term" value="F:UDP-N-acetylmuramoylalanyl-D-glutamate-2,6-diaminopimelate ligase activity"/>
    <property type="evidence" value="ECO:0007669"/>
    <property type="project" value="UniProtKB-UniRule"/>
</dbReference>
<dbReference type="GO" id="GO:0051301">
    <property type="term" value="P:cell division"/>
    <property type="evidence" value="ECO:0007669"/>
    <property type="project" value="UniProtKB-KW"/>
</dbReference>
<dbReference type="GO" id="GO:0071555">
    <property type="term" value="P:cell wall organization"/>
    <property type="evidence" value="ECO:0007669"/>
    <property type="project" value="UniProtKB-KW"/>
</dbReference>
<dbReference type="GO" id="GO:0009252">
    <property type="term" value="P:peptidoglycan biosynthetic process"/>
    <property type="evidence" value="ECO:0007669"/>
    <property type="project" value="UniProtKB-UniRule"/>
</dbReference>
<dbReference type="GO" id="GO:0008360">
    <property type="term" value="P:regulation of cell shape"/>
    <property type="evidence" value="ECO:0007669"/>
    <property type="project" value="UniProtKB-KW"/>
</dbReference>
<dbReference type="Gene3D" id="3.90.190.20">
    <property type="entry name" value="Mur ligase, C-terminal domain"/>
    <property type="match status" value="1"/>
</dbReference>
<dbReference type="Gene3D" id="3.40.1190.10">
    <property type="entry name" value="Mur-like, catalytic domain"/>
    <property type="match status" value="1"/>
</dbReference>
<dbReference type="Gene3D" id="3.40.1390.10">
    <property type="entry name" value="MurE/MurF, N-terminal domain"/>
    <property type="match status" value="1"/>
</dbReference>
<dbReference type="HAMAP" id="MF_00208">
    <property type="entry name" value="MurE"/>
    <property type="match status" value="1"/>
</dbReference>
<dbReference type="InterPro" id="IPR036565">
    <property type="entry name" value="Mur-like_cat_sf"/>
</dbReference>
<dbReference type="InterPro" id="IPR004101">
    <property type="entry name" value="Mur_ligase_C"/>
</dbReference>
<dbReference type="InterPro" id="IPR036615">
    <property type="entry name" value="Mur_ligase_C_dom_sf"/>
</dbReference>
<dbReference type="InterPro" id="IPR013221">
    <property type="entry name" value="Mur_ligase_cen"/>
</dbReference>
<dbReference type="InterPro" id="IPR000713">
    <property type="entry name" value="Mur_ligase_N"/>
</dbReference>
<dbReference type="InterPro" id="IPR035911">
    <property type="entry name" value="MurE/MurF_N"/>
</dbReference>
<dbReference type="InterPro" id="IPR005761">
    <property type="entry name" value="UDP-N-AcMur-Glu-dNH2Pim_ligase"/>
</dbReference>
<dbReference type="NCBIfam" id="TIGR01085">
    <property type="entry name" value="murE"/>
    <property type="match status" value="1"/>
</dbReference>
<dbReference type="NCBIfam" id="NF001124">
    <property type="entry name" value="PRK00139.1-2"/>
    <property type="match status" value="1"/>
</dbReference>
<dbReference type="NCBIfam" id="NF001126">
    <property type="entry name" value="PRK00139.1-4"/>
    <property type="match status" value="1"/>
</dbReference>
<dbReference type="PANTHER" id="PTHR23135">
    <property type="entry name" value="MUR LIGASE FAMILY MEMBER"/>
    <property type="match status" value="1"/>
</dbReference>
<dbReference type="PANTHER" id="PTHR23135:SF4">
    <property type="entry name" value="UDP-N-ACETYLMURAMOYL-L-ALANYL-D-GLUTAMATE--2,6-DIAMINOPIMELATE LIGASE MURE HOMOLOG, CHLOROPLASTIC"/>
    <property type="match status" value="1"/>
</dbReference>
<dbReference type="Pfam" id="PF01225">
    <property type="entry name" value="Mur_ligase"/>
    <property type="match status" value="1"/>
</dbReference>
<dbReference type="Pfam" id="PF02875">
    <property type="entry name" value="Mur_ligase_C"/>
    <property type="match status" value="1"/>
</dbReference>
<dbReference type="Pfam" id="PF08245">
    <property type="entry name" value="Mur_ligase_M"/>
    <property type="match status" value="1"/>
</dbReference>
<dbReference type="SUPFAM" id="SSF53623">
    <property type="entry name" value="MurD-like peptide ligases, catalytic domain"/>
    <property type="match status" value="1"/>
</dbReference>
<dbReference type="SUPFAM" id="SSF53244">
    <property type="entry name" value="MurD-like peptide ligases, peptide-binding domain"/>
    <property type="match status" value="1"/>
</dbReference>
<dbReference type="SUPFAM" id="SSF63418">
    <property type="entry name" value="MurE/MurF N-terminal domain"/>
    <property type="match status" value="1"/>
</dbReference>
<accession>A7FTY1</accession>
<name>MURE_CLOB1</name>
<proteinExistence type="inferred from homology"/>
<protein>
    <recommendedName>
        <fullName evidence="1">UDP-N-acetylmuramoyl-L-alanyl-D-glutamate--2,6-diaminopimelate ligase</fullName>
        <ecNumber evidence="1">6.3.2.13</ecNumber>
    </recommendedName>
    <alternativeName>
        <fullName evidence="1">Meso-A2pm-adding enzyme</fullName>
    </alternativeName>
    <alternativeName>
        <fullName evidence="1">Meso-diaminopimelate-adding enzyme</fullName>
    </alternativeName>
    <alternativeName>
        <fullName evidence="1">UDP-MurNAc-L-Ala-D-Glu:meso-diaminopimelate ligase</fullName>
    </alternativeName>
    <alternativeName>
        <fullName evidence="1">UDP-MurNAc-tripeptide synthetase</fullName>
    </alternativeName>
    <alternativeName>
        <fullName evidence="1">UDP-N-acetylmuramyl-tripeptide synthetase</fullName>
    </alternativeName>
</protein>